<accession>Q1IVL5</accession>
<evidence type="ECO:0000255" key="1">
    <source>
        <dbReference type="HAMAP-Rule" id="MF_00129"/>
    </source>
</evidence>
<sequence>MGFTEQYDVVVVGAGHAGCEAAMAAARMGLRTALYTLNVDLIAQMSCNPAVGGIAKGHLVREVDALGGIMGEVTDAVGIQFRLLNTSRGPAVWSPRAQCDKQQYRLKMREVLESEPNLKIKQAEVADLIVEDVSDPTHPERMKIARGIKLRDGRTVGALAVVITTGTFLNGLIHCGEEQYPAGRSGEPASVLLGESLKKMGLRGCRLKTGTPPRLDGRSIDWSKFAVQPGDAEPTPFSFRTKKITQKQVPCYIAHTTPETHQLIRENVHRSPMYSGQIQSTGPRYCPSIEDKIVKFPDKETHQIFLEPEGLNTYEVYVNGMSTSLPIDVQLRMVHSIVGLENAEMLRPGYAIEYDSIDPTELQRTLETKKIGSLYLGGQINGTSGYEEAACQGLMAGINAALAVKHEPPLVLDRTEAYTAILIDDLISKGTNEPYRMFTSRAEFRLHLRIDNADRRLTPHGRRVGLIKDEAWHAHLAKQQRMDELKMTLEKTRIRTSELPVELAEKFGNIDGSTVVQLLKRPESDVAAFEQIIRRVQPTFFERGDSEREFVSDIRNELKAVETEIKYAGYLDQQTKAIDRLKRSEQRVIPEWFDYASVSGLSREMCEKMQRVRPQTIGQASRIPGVTPAAVSLINVYIEIQGRKQKATT</sequence>
<name>MNMG_KORVE</name>
<proteinExistence type="inferred from homology"/>
<comment type="function">
    <text evidence="1">NAD-binding protein involved in the addition of a carboxymethylaminomethyl (cmnm) group at the wobble position (U34) of certain tRNAs, forming tRNA-cmnm(5)s(2)U34.</text>
</comment>
<comment type="cofactor">
    <cofactor evidence="1">
        <name>FAD</name>
        <dbReference type="ChEBI" id="CHEBI:57692"/>
    </cofactor>
</comment>
<comment type="subunit">
    <text evidence="1">Homodimer. Heterotetramer of two MnmE and two MnmG subunits.</text>
</comment>
<comment type="subcellular location">
    <subcellularLocation>
        <location evidence="1">Cytoplasm</location>
    </subcellularLocation>
</comment>
<comment type="similarity">
    <text evidence="1">Belongs to the MnmG family.</text>
</comment>
<dbReference type="EMBL" id="CP000360">
    <property type="protein sequence ID" value="ABF39085.1"/>
    <property type="molecule type" value="Genomic_DNA"/>
</dbReference>
<dbReference type="RefSeq" id="WP_011520887.1">
    <property type="nucleotide sequence ID" value="NC_008009.1"/>
</dbReference>
<dbReference type="SMR" id="Q1IVL5"/>
<dbReference type="STRING" id="204669.Acid345_0080"/>
<dbReference type="EnsemblBacteria" id="ABF39085">
    <property type="protein sequence ID" value="ABF39085"/>
    <property type="gene ID" value="Acid345_0080"/>
</dbReference>
<dbReference type="KEGG" id="aba:Acid345_0080"/>
<dbReference type="eggNOG" id="COG0445">
    <property type="taxonomic scope" value="Bacteria"/>
</dbReference>
<dbReference type="HOGENOM" id="CLU_007831_2_2_0"/>
<dbReference type="OrthoDB" id="9815560at2"/>
<dbReference type="Proteomes" id="UP000002432">
    <property type="component" value="Chromosome"/>
</dbReference>
<dbReference type="GO" id="GO:0005829">
    <property type="term" value="C:cytosol"/>
    <property type="evidence" value="ECO:0007669"/>
    <property type="project" value="TreeGrafter"/>
</dbReference>
<dbReference type="GO" id="GO:0050660">
    <property type="term" value="F:flavin adenine dinucleotide binding"/>
    <property type="evidence" value="ECO:0007669"/>
    <property type="project" value="UniProtKB-UniRule"/>
</dbReference>
<dbReference type="GO" id="GO:0030488">
    <property type="term" value="P:tRNA methylation"/>
    <property type="evidence" value="ECO:0007669"/>
    <property type="project" value="TreeGrafter"/>
</dbReference>
<dbReference type="GO" id="GO:0002098">
    <property type="term" value="P:tRNA wobble uridine modification"/>
    <property type="evidence" value="ECO:0007669"/>
    <property type="project" value="InterPro"/>
</dbReference>
<dbReference type="FunFam" id="1.10.150.570:FF:000001">
    <property type="entry name" value="tRNA uridine 5-carboxymethylaminomethyl modification enzyme MnmG"/>
    <property type="match status" value="1"/>
</dbReference>
<dbReference type="FunFam" id="3.50.50.60:FF:000002">
    <property type="entry name" value="tRNA uridine 5-carboxymethylaminomethyl modification enzyme MnmG"/>
    <property type="match status" value="1"/>
</dbReference>
<dbReference type="Gene3D" id="3.50.50.60">
    <property type="entry name" value="FAD/NAD(P)-binding domain"/>
    <property type="match status" value="2"/>
</dbReference>
<dbReference type="Gene3D" id="1.10.150.570">
    <property type="entry name" value="GidA associated domain, C-terminal subdomain"/>
    <property type="match status" value="1"/>
</dbReference>
<dbReference type="Gene3D" id="1.10.10.1800">
    <property type="entry name" value="tRNA uridine 5-carboxymethylaminomethyl modification enzyme MnmG/GidA"/>
    <property type="match status" value="1"/>
</dbReference>
<dbReference type="HAMAP" id="MF_00129">
    <property type="entry name" value="MnmG_GidA"/>
    <property type="match status" value="1"/>
</dbReference>
<dbReference type="InterPro" id="IPR036188">
    <property type="entry name" value="FAD/NAD-bd_sf"/>
</dbReference>
<dbReference type="InterPro" id="IPR049312">
    <property type="entry name" value="GIDA_C_N"/>
</dbReference>
<dbReference type="InterPro" id="IPR004416">
    <property type="entry name" value="MnmG"/>
</dbReference>
<dbReference type="InterPro" id="IPR002218">
    <property type="entry name" value="MnmG-rel"/>
</dbReference>
<dbReference type="InterPro" id="IPR020595">
    <property type="entry name" value="MnmG-rel_CS"/>
</dbReference>
<dbReference type="InterPro" id="IPR026904">
    <property type="entry name" value="MnmG_C"/>
</dbReference>
<dbReference type="InterPro" id="IPR047001">
    <property type="entry name" value="MnmG_C_subdom"/>
</dbReference>
<dbReference type="InterPro" id="IPR044920">
    <property type="entry name" value="MnmG_C_subdom_sf"/>
</dbReference>
<dbReference type="InterPro" id="IPR040131">
    <property type="entry name" value="MnmG_N"/>
</dbReference>
<dbReference type="NCBIfam" id="TIGR00136">
    <property type="entry name" value="mnmG_gidA"/>
    <property type="match status" value="1"/>
</dbReference>
<dbReference type="PANTHER" id="PTHR11806">
    <property type="entry name" value="GLUCOSE INHIBITED DIVISION PROTEIN A"/>
    <property type="match status" value="1"/>
</dbReference>
<dbReference type="PANTHER" id="PTHR11806:SF0">
    <property type="entry name" value="PROTEIN MTO1 HOMOLOG, MITOCHONDRIAL"/>
    <property type="match status" value="1"/>
</dbReference>
<dbReference type="Pfam" id="PF01134">
    <property type="entry name" value="GIDA"/>
    <property type="match status" value="1"/>
</dbReference>
<dbReference type="Pfam" id="PF21680">
    <property type="entry name" value="GIDA_C_1st"/>
    <property type="match status" value="1"/>
</dbReference>
<dbReference type="Pfam" id="PF13932">
    <property type="entry name" value="SAM_GIDA_C"/>
    <property type="match status" value="1"/>
</dbReference>
<dbReference type="PRINTS" id="PR00411">
    <property type="entry name" value="PNDRDTASEI"/>
</dbReference>
<dbReference type="SMART" id="SM01228">
    <property type="entry name" value="GIDA_assoc_3"/>
    <property type="match status" value="1"/>
</dbReference>
<dbReference type="SUPFAM" id="SSF51905">
    <property type="entry name" value="FAD/NAD(P)-binding domain"/>
    <property type="match status" value="1"/>
</dbReference>
<dbReference type="PROSITE" id="PS01280">
    <property type="entry name" value="GIDA_1"/>
    <property type="match status" value="1"/>
</dbReference>
<reference key="1">
    <citation type="journal article" date="2009" name="Appl. Environ. Microbiol.">
        <title>Three genomes from the phylum Acidobacteria provide insight into the lifestyles of these microorganisms in soils.</title>
        <authorList>
            <person name="Ward N.L."/>
            <person name="Challacombe J.F."/>
            <person name="Janssen P.H."/>
            <person name="Henrissat B."/>
            <person name="Coutinho P.M."/>
            <person name="Wu M."/>
            <person name="Xie G."/>
            <person name="Haft D.H."/>
            <person name="Sait M."/>
            <person name="Badger J."/>
            <person name="Barabote R.D."/>
            <person name="Bradley B."/>
            <person name="Brettin T.S."/>
            <person name="Brinkac L.M."/>
            <person name="Bruce D."/>
            <person name="Creasy T."/>
            <person name="Daugherty S.C."/>
            <person name="Davidsen T.M."/>
            <person name="DeBoy R.T."/>
            <person name="Detter J.C."/>
            <person name="Dodson R.J."/>
            <person name="Durkin A.S."/>
            <person name="Ganapathy A."/>
            <person name="Gwinn-Giglio M."/>
            <person name="Han C.S."/>
            <person name="Khouri H."/>
            <person name="Kiss H."/>
            <person name="Kothari S.P."/>
            <person name="Madupu R."/>
            <person name="Nelson K.E."/>
            <person name="Nelson W.C."/>
            <person name="Paulsen I."/>
            <person name="Penn K."/>
            <person name="Ren Q."/>
            <person name="Rosovitz M.J."/>
            <person name="Selengut J.D."/>
            <person name="Shrivastava S."/>
            <person name="Sullivan S.A."/>
            <person name="Tapia R."/>
            <person name="Thompson L.S."/>
            <person name="Watkins K.L."/>
            <person name="Yang Q."/>
            <person name="Yu C."/>
            <person name="Zafar N."/>
            <person name="Zhou L."/>
            <person name="Kuske C.R."/>
        </authorList>
    </citation>
    <scope>NUCLEOTIDE SEQUENCE [LARGE SCALE GENOMIC DNA]</scope>
    <source>
        <strain>Ellin345</strain>
    </source>
</reference>
<gene>
    <name evidence="1" type="primary">mnmG</name>
    <name evidence="1" type="synonym">gidA</name>
    <name type="ordered locus">Acid345_0080</name>
</gene>
<feature type="chain" id="PRO_1000016538" description="tRNA uridine 5-carboxymethylaminomethyl modification enzyme MnmG">
    <location>
        <begin position="1"/>
        <end position="649"/>
    </location>
</feature>
<feature type="binding site" evidence="1">
    <location>
        <begin position="13"/>
        <end position="18"/>
    </location>
    <ligand>
        <name>FAD</name>
        <dbReference type="ChEBI" id="CHEBI:57692"/>
    </ligand>
</feature>
<feature type="binding site" evidence="1">
    <location>
        <position position="125"/>
    </location>
    <ligand>
        <name>FAD</name>
        <dbReference type="ChEBI" id="CHEBI:57692"/>
    </ligand>
</feature>
<feature type="binding site" evidence="1">
    <location>
        <position position="190"/>
    </location>
    <ligand>
        <name>FAD</name>
        <dbReference type="ChEBI" id="CHEBI:57692"/>
    </ligand>
</feature>
<feature type="binding site" evidence="1">
    <location>
        <begin position="282"/>
        <end position="296"/>
    </location>
    <ligand>
        <name>NAD(+)</name>
        <dbReference type="ChEBI" id="CHEBI:57540"/>
    </ligand>
</feature>
<feature type="binding site" evidence="1">
    <location>
        <position position="379"/>
    </location>
    <ligand>
        <name>FAD</name>
        <dbReference type="ChEBI" id="CHEBI:57692"/>
    </ligand>
</feature>
<protein>
    <recommendedName>
        <fullName evidence="1">tRNA uridine 5-carboxymethylaminomethyl modification enzyme MnmG</fullName>
    </recommendedName>
    <alternativeName>
        <fullName evidence="1">Glucose-inhibited division protein A</fullName>
    </alternativeName>
</protein>
<keyword id="KW-0963">Cytoplasm</keyword>
<keyword id="KW-0274">FAD</keyword>
<keyword id="KW-0285">Flavoprotein</keyword>
<keyword id="KW-0520">NAD</keyword>
<keyword id="KW-1185">Reference proteome</keyword>
<keyword id="KW-0819">tRNA processing</keyword>
<organism>
    <name type="scientific">Koribacter versatilis (strain Ellin345)</name>
    <dbReference type="NCBI Taxonomy" id="204669"/>
    <lineage>
        <taxon>Bacteria</taxon>
        <taxon>Pseudomonadati</taxon>
        <taxon>Acidobacteriota</taxon>
        <taxon>Terriglobia</taxon>
        <taxon>Terriglobales</taxon>
        <taxon>Candidatus Korobacteraceae</taxon>
        <taxon>Candidatus Korobacter</taxon>
    </lineage>
</organism>